<name>EFTS_ERWT9</name>
<gene>
    <name evidence="1" type="primary">tsf</name>
    <name type="ordered locus">ETA_08910</name>
</gene>
<sequence>MADITAALVKELRERTGAGMMDCKKALTEANGDIELAIENMRKSGAIKAAKKAGNVAADGVIKTRIEGNFGVILEVNCQTDFVAKDAGFQAFADKVLDAAFAGKITDVDVLKAQFEEERVALVAKIGENINIRRVASLEGDVLGSYLHGARIGVLISATAADEELVKQLAMHVAASKPEFVKPEDVSAEVVAKEYQVQLDIAMQSGKPKEIAEKMVEGRMKKFTGEVSLTGQPFVIDPSKTVGQLLKEKNADVTSFIRFEVGEGIEKAETDFAAEVAAMSKQS</sequence>
<feature type="chain" id="PRO_1000116736" description="Elongation factor Ts">
    <location>
        <begin position="1"/>
        <end position="283"/>
    </location>
</feature>
<feature type="region of interest" description="Involved in Mg(2+) ion dislocation from EF-Tu" evidence="1">
    <location>
        <begin position="80"/>
        <end position="83"/>
    </location>
</feature>
<comment type="function">
    <text evidence="1">Associates with the EF-Tu.GDP complex and induces the exchange of GDP to GTP. It remains bound to the aminoacyl-tRNA.EF-Tu.GTP complex up to the GTP hydrolysis stage on the ribosome.</text>
</comment>
<comment type="subcellular location">
    <subcellularLocation>
        <location evidence="1">Cytoplasm</location>
    </subcellularLocation>
</comment>
<comment type="similarity">
    <text evidence="1">Belongs to the EF-Ts family.</text>
</comment>
<reference key="1">
    <citation type="journal article" date="2008" name="Environ. Microbiol.">
        <title>The genome of Erwinia tasmaniensis strain Et1/99, a non-pathogenic bacterium in the genus Erwinia.</title>
        <authorList>
            <person name="Kube M."/>
            <person name="Migdoll A.M."/>
            <person name="Mueller I."/>
            <person name="Kuhl H."/>
            <person name="Beck A."/>
            <person name="Reinhardt R."/>
            <person name="Geider K."/>
        </authorList>
    </citation>
    <scope>NUCLEOTIDE SEQUENCE [LARGE SCALE GENOMIC DNA]</scope>
    <source>
        <strain>DSM 17950 / CFBP 7177 / CIP 109463 / NCPPB 4357 / Et1/99</strain>
    </source>
</reference>
<proteinExistence type="inferred from homology"/>
<organism>
    <name type="scientific">Erwinia tasmaniensis (strain DSM 17950 / CFBP 7177 / CIP 109463 / NCPPB 4357 / Et1/99)</name>
    <dbReference type="NCBI Taxonomy" id="465817"/>
    <lineage>
        <taxon>Bacteria</taxon>
        <taxon>Pseudomonadati</taxon>
        <taxon>Pseudomonadota</taxon>
        <taxon>Gammaproteobacteria</taxon>
        <taxon>Enterobacterales</taxon>
        <taxon>Erwiniaceae</taxon>
        <taxon>Erwinia</taxon>
    </lineage>
</organism>
<evidence type="ECO:0000255" key="1">
    <source>
        <dbReference type="HAMAP-Rule" id="MF_00050"/>
    </source>
</evidence>
<accession>B2VE09</accession>
<protein>
    <recommendedName>
        <fullName evidence="1">Elongation factor Ts</fullName>
        <shortName evidence="1">EF-Ts</shortName>
    </recommendedName>
</protein>
<dbReference type="EMBL" id="CU468135">
    <property type="protein sequence ID" value="CAO95937.1"/>
    <property type="molecule type" value="Genomic_DNA"/>
</dbReference>
<dbReference type="RefSeq" id="WP_012440639.1">
    <property type="nucleotide sequence ID" value="NC_010694.1"/>
</dbReference>
<dbReference type="SMR" id="B2VE09"/>
<dbReference type="STRING" id="465817.ETA_08910"/>
<dbReference type="KEGG" id="eta:ETA_08910"/>
<dbReference type="eggNOG" id="COG0264">
    <property type="taxonomic scope" value="Bacteria"/>
</dbReference>
<dbReference type="HOGENOM" id="CLU_047155_0_2_6"/>
<dbReference type="OrthoDB" id="9808348at2"/>
<dbReference type="Proteomes" id="UP000001726">
    <property type="component" value="Chromosome"/>
</dbReference>
<dbReference type="GO" id="GO:0005737">
    <property type="term" value="C:cytoplasm"/>
    <property type="evidence" value="ECO:0007669"/>
    <property type="project" value="UniProtKB-SubCell"/>
</dbReference>
<dbReference type="GO" id="GO:0003746">
    <property type="term" value="F:translation elongation factor activity"/>
    <property type="evidence" value="ECO:0007669"/>
    <property type="project" value="UniProtKB-UniRule"/>
</dbReference>
<dbReference type="CDD" id="cd14275">
    <property type="entry name" value="UBA_EF-Ts"/>
    <property type="match status" value="1"/>
</dbReference>
<dbReference type="FunFam" id="1.10.286.20:FF:000001">
    <property type="entry name" value="Elongation factor Ts"/>
    <property type="match status" value="1"/>
</dbReference>
<dbReference type="FunFam" id="1.10.8.10:FF:000001">
    <property type="entry name" value="Elongation factor Ts"/>
    <property type="match status" value="1"/>
</dbReference>
<dbReference type="FunFam" id="3.30.479.20:FF:000001">
    <property type="entry name" value="Elongation factor Ts"/>
    <property type="match status" value="1"/>
</dbReference>
<dbReference type="Gene3D" id="1.10.286.20">
    <property type="match status" value="1"/>
</dbReference>
<dbReference type="Gene3D" id="1.10.8.10">
    <property type="entry name" value="DNA helicase RuvA subunit, C-terminal domain"/>
    <property type="match status" value="1"/>
</dbReference>
<dbReference type="Gene3D" id="3.30.479.20">
    <property type="entry name" value="Elongation factor Ts, dimerisation domain"/>
    <property type="match status" value="2"/>
</dbReference>
<dbReference type="HAMAP" id="MF_00050">
    <property type="entry name" value="EF_Ts"/>
    <property type="match status" value="1"/>
</dbReference>
<dbReference type="InterPro" id="IPR036402">
    <property type="entry name" value="EF-Ts_dimer_sf"/>
</dbReference>
<dbReference type="InterPro" id="IPR001816">
    <property type="entry name" value="Transl_elong_EFTs/EF1B"/>
</dbReference>
<dbReference type="InterPro" id="IPR014039">
    <property type="entry name" value="Transl_elong_EFTs/EF1B_dimer"/>
</dbReference>
<dbReference type="InterPro" id="IPR018101">
    <property type="entry name" value="Transl_elong_Ts_CS"/>
</dbReference>
<dbReference type="InterPro" id="IPR009060">
    <property type="entry name" value="UBA-like_sf"/>
</dbReference>
<dbReference type="NCBIfam" id="TIGR00116">
    <property type="entry name" value="tsf"/>
    <property type="match status" value="1"/>
</dbReference>
<dbReference type="PANTHER" id="PTHR11741">
    <property type="entry name" value="ELONGATION FACTOR TS"/>
    <property type="match status" value="1"/>
</dbReference>
<dbReference type="PANTHER" id="PTHR11741:SF0">
    <property type="entry name" value="ELONGATION FACTOR TS, MITOCHONDRIAL"/>
    <property type="match status" value="1"/>
</dbReference>
<dbReference type="Pfam" id="PF00889">
    <property type="entry name" value="EF_TS"/>
    <property type="match status" value="1"/>
</dbReference>
<dbReference type="SUPFAM" id="SSF54713">
    <property type="entry name" value="Elongation factor Ts (EF-Ts), dimerisation domain"/>
    <property type="match status" value="2"/>
</dbReference>
<dbReference type="SUPFAM" id="SSF46934">
    <property type="entry name" value="UBA-like"/>
    <property type="match status" value="1"/>
</dbReference>
<dbReference type="PROSITE" id="PS01126">
    <property type="entry name" value="EF_TS_1"/>
    <property type="match status" value="1"/>
</dbReference>
<dbReference type="PROSITE" id="PS01127">
    <property type="entry name" value="EF_TS_2"/>
    <property type="match status" value="1"/>
</dbReference>
<keyword id="KW-0963">Cytoplasm</keyword>
<keyword id="KW-0251">Elongation factor</keyword>
<keyword id="KW-0648">Protein biosynthesis</keyword>
<keyword id="KW-1185">Reference proteome</keyword>